<sequence length="501" mass="56123">MSDDDQELGITESKEHSPGDWYAEVVQKAGLADYAPMGGFIVTRPRGYALWEAIQDNLDGWFKDTGVENAYFPMFIPEDYLEREKDIVEGFDPEVAWVTQGGHDDLDQRLAVRPTSESIIAPYLSQWVRSHRDLPLRVNQWNSVVRWEATETKPFFRTKEFLWQEGHTAHATDEAAWAETTLRLDQYHRLYEDVLGIPVLRGRKPDHDKFPGADTTMSVEALMPDGKSVQGGTSHHLGQSFADAFDITFADEDEAERTAYTTSWGLSWRAIGALVMSHSDDQGLVLPPTVAPKQVVIVPIWQEDTKDDVEQYGAEIAAELEAQGVRVHFDDRDGRNPGFKFNEWELNGVPVRFEIGPNEVEDDEVTVVHRPDGESTVEDRAAIADRVHDHLDEVYDKLYDAAADRLAENVREADNRADILGTIGQHGGYVKAPWCGDQDCEAEIKDQIAAEIVMVPLGEDSAARAASELEGERVPEPDHDGEDCAICGDEATRTAYFAKSY</sequence>
<comment type="function">
    <text evidence="1">Catalyzes the attachment of proline to tRNA(Pro) in a two-step reaction: proline is first activated by ATP to form Pro-AMP and then transferred to the acceptor end of tRNA(Pro).</text>
</comment>
<comment type="catalytic activity">
    <reaction evidence="1">
        <text>tRNA(Pro) + L-proline + ATP = L-prolyl-tRNA(Pro) + AMP + diphosphate</text>
        <dbReference type="Rhea" id="RHEA:14305"/>
        <dbReference type="Rhea" id="RHEA-COMP:9700"/>
        <dbReference type="Rhea" id="RHEA-COMP:9702"/>
        <dbReference type="ChEBI" id="CHEBI:30616"/>
        <dbReference type="ChEBI" id="CHEBI:33019"/>
        <dbReference type="ChEBI" id="CHEBI:60039"/>
        <dbReference type="ChEBI" id="CHEBI:78442"/>
        <dbReference type="ChEBI" id="CHEBI:78532"/>
        <dbReference type="ChEBI" id="CHEBI:456215"/>
        <dbReference type="EC" id="6.1.1.15"/>
    </reaction>
</comment>
<comment type="subunit">
    <text evidence="1">Homodimer.</text>
</comment>
<comment type="subcellular location">
    <subcellularLocation>
        <location evidence="1">Cytoplasm</location>
    </subcellularLocation>
</comment>
<comment type="domain">
    <text evidence="1">Consists of three domains: the N-terminal catalytic domain, the anticodon-binding domain and the C-terminal extension.</text>
</comment>
<comment type="similarity">
    <text evidence="1">Belongs to the class-II aminoacyl-tRNA synthetase family. ProS type 3 subfamily.</text>
</comment>
<feature type="chain" id="PRO_1000215565" description="Proline--tRNA ligase">
    <location>
        <begin position="1"/>
        <end position="501"/>
    </location>
</feature>
<keyword id="KW-0030">Aminoacyl-tRNA synthetase</keyword>
<keyword id="KW-0067">ATP-binding</keyword>
<keyword id="KW-0963">Cytoplasm</keyword>
<keyword id="KW-0436">Ligase</keyword>
<keyword id="KW-0547">Nucleotide-binding</keyword>
<keyword id="KW-0648">Protein biosynthesis</keyword>
<gene>
    <name evidence="1" type="primary">proS</name>
    <name type="ordered locus">OE_1595F</name>
</gene>
<accession>B0R3A3</accession>
<protein>
    <recommendedName>
        <fullName evidence="1">Proline--tRNA ligase</fullName>
        <ecNumber evidence="1">6.1.1.15</ecNumber>
    </recommendedName>
    <alternativeName>
        <fullName evidence="1">Prolyl-tRNA synthetase</fullName>
        <shortName evidence="1">ProRS</shortName>
    </alternativeName>
</protein>
<evidence type="ECO:0000255" key="1">
    <source>
        <dbReference type="HAMAP-Rule" id="MF_01571"/>
    </source>
</evidence>
<organism>
    <name type="scientific">Halobacterium salinarum (strain ATCC 29341 / DSM 671 / R1)</name>
    <dbReference type="NCBI Taxonomy" id="478009"/>
    <lineage>
        <taxon>Archaea</taxon>
        <taxon>Methanobacteriati</taxon>
        <taxon>Methanobacteriota</taxon>
        <taxon>Stenosarchaea group</taxon>
        <taxon>Halobacteria</taxon>
        <taxon>Halobacteriales</taxon>
        <taxon>Halobacteriaceae</taxon>
        <taxon>Halobacterium</taxon>
        <taxon>Halobacterium salinarum NRC-34001</taxon>
    </lineage>
</organism>
<proteinExistence type="inferred from homology"/>
<reference key="1">
    <citation type="journal article" date="2008" name="Genomics">
        <title>Evolution in the laboratory: the genome of Halobacterium salinarum strain R1 compared to that of strain NRC-1.</title>
        <authorList>
            <person name="Pfeiffer F."/>
            <person name="Schuster S.C."/>
            <person name="Broicher A."/>
            <person name="Falb M."/>
            <person name="Palm P."/>
            <person name="Rodewald K."/>
            <person name="Ruepp A."/>
            <person name="Soppa J."/>
            <person name="Tittor J."/>
            <person name="Oesterhelt D."/>
        </authorList>
    </citation>
    <scope>NUCLEOTIDE SEQUENCE [LARGE SCALE GENOMIC DNA]</scope>
    <source>
        <strain>ATCC 29341 / DSM 671 / R1</strain>
    </source>
</reference>
<name>SYP_HALS3</name>
<dbReference type="EC" id="6.1.1.15" evidence="1"/>
<dbReference type="EMBL" id="AM774415">
    <property type="protein sequence ID" value="CAP13217.1"/>
    <property type="molecule type" value="Genomic_DNA"/>
</dbReference>
<dbReference type="RefSeq" id="WP_010902251.1">
    <property type="nucleotide sequence ID" value="NC_010364.1"/>
</dbReference>
<dbReference type="SMR" id="B0R3A3"/>
<dbReference type="EnsemblBacteria" id="CAP13217">
    <property type="protein sequence ID" value="CAP13217"/>
    <property type="gene ID" value="OE_1595F"/>
</dbReference>
<dbReference type="GeneID" id="68693326"/>
<dbReference type="KEGG" id="hsl:OE_1595F"/>
<dbReference type="HOGENOM" id="CLU_001882_4_2_2"/>
<dbReference type="PhylomeDB" id="B0R3A3"/>
<dbReference type="Proteomes" id="UP000001321">
    <property type="component" value="Chromosome"/>
</dbReference>
<dbReference type="GO" id="GO:0017101">
    <property type="term" value="C:aminoacyl-tRNA synthetase multienzyme complex"/>
    <property type="evidence" value="ECO:0007669"/>
    <property type="project" value="TreeGrafter"/>
</dbReference>
<dbReference type="GO" id="GO:0005737">
    <property type="term" value="C:cytoplasm"/>
    <property type="evidence" value="ECO:0007669"/>
    <property type="project" value="UniProtKB-SubCell"/>
</dbReference>
<dbReference type="GO" id="GO:0005524">
    <property type="term" value="F:ATP binding"/>
    <property type="evidence" value="ECO:0007669"/>
    <property type="project" value="UniProtKB-UniRule"/>
</dbReference>
<dbReference type="GO" id="GO:0004827">
    <property type="term" value="F:proline-tRNA ligase activity"/>
    <property type="evidence" value="ECO:0007669"/>
    <property type="project" value="UniProtKB-UniRule"/>
</dbReference>
<dbReference type="GO" id="GO:0006433">
    <property type="term" value="P:prolyl-tRNA aminoacylation"/>
    <property type="evidence" value="ECO:0007669"/>
    <property type="project" value="UniProtKB-UniRule"/>
</dbReference>
<dbReference type="CDD" id="cd00862">
    <property type="entry name" value="ProRS_anticodon_zinc"/>
    <property type="match status" value="1"/>
</dbReference>
<dbReference type="CDD" id="cd00778">
    <property type="entry name" value="ProRS_core_arch_euk"/>
    <property type="match status" value="1"/>
</dbReference>
<dbReference type="FunFam" id="3.30.930.10:FF:000037">
    <property type="entry name" value="Proline--tRNA ligase"/>
    <property type="match status" value="1"/>
</dbReference>
<dbReference type="Gene3D" id="3.40.50.800">
    <property type="entry name" value="Anticodon-binding domain"/>
    <property type="match status" value="1"/>
</dbReference>
<dbReference type="Gene3D" id="3.30.930.10">
    <property type="entry name" value="Bira Bifunctional Protein, Domain 2"/>
    <property type="match status" value="1"/>
</dbReference>
<dbReference type="Gene3D" id="3.30.110.30">
    <property type="entry name" value="C-terminal domain of ProRS"/>
    <property type="match status" value="1"/>
</dbReference>
<dbReference type="HAMAP" id="MF_01571">
    <property type="entry name" value="Pro_tRNA_synth_type3"/>
    <property type="match status" value="1"/>
</dbReference>
<dbReference type="InterPro" id="IPR002314">
    <property type="entry name" value="aa-tRNA-synt_IIb"/>
</dbReference>
<dbReference type="InterPro" id="IPR006195">
    <property type="entry name" value="aa-tRNA-synth_II"/>
</dbReference>
<dbReference type="InterPro" id="IPR045864">
    <property type="entry name" value="aa-tRNA-synth_II/BPL/LPL"/>
</dbReference>
<dbReference type="InterPro" id="IPR004154">
    <property type="entry name" value="Anticodon-bd"/>
</dbReference>
<dbReference type="InterPro" id="IPR036621">
    <property type="entry name" value="Anticodon-bd_dom_sf"/>
</dbReference>
<dbReference type="InterPro" id="IPR002316">
    <property type="entry name" value="Pro-tRNA-ligase_IIa"/>
</dbReference>
<dbReference type="InterPro" id="IPR004499">
    <property type="entry name" value="Pro-tRNA-ligase_IIa_arc-type"/>
</dbReference>
<dbReference type="InterPro" id="IPR016061">
    <property type="entry name" value="Pro-tRNA_ligase_II_C"/>
</dbReference>
<dbReference type="InterPro" id="IPR017449">
    <property type="entry name" value="Pro-tRNA_synth_II"/>
</dbReference>
<dbReference type="InterPro" id="IPR033721">
    <property type="entry name" value="ProRS_core_arch_euk"/>
</dbReference>
<dbReference type="NCBIfam" id="TIGR00408">
    <property type="entry name" value="proS_fam_I"/>
    <property type="match status" value="1"/>
</dbReference>
<dbReference type="PANTHER" id="PTHR43382:SF2">
    <property type="entry name" value="BIFUNCTIONAL GLUTAMATE_PROLINE--TRNA LIGASE"/>
    <property type="match status" value="1"/>
</dbReference>
<dbReference type="PANTHER" id="PTHR43382">
    <property type="entry name" value="PROLYL-TRNA SYNTHETASE"/>
    <property type="match status" value="1"/>
</dbReference>
<dbReference type="Pfam" id="PF03129">
    <property type="entry name" value="HGTP_anticodon"/>
    <property type="match status" value="1"/>
</dbReference>
<dbReference type="Pfam" id="PF09180">
    <property type="entry name" value="ProRS-C_1"/>
    <property type="match status" value="1"/>
</dbReference>
<dbReference type="Pfam" id="PF00587">
    <property type="entry name" value="tRNA-synt_2b"/>
    <property type="match status" value="1"/>
</dbReference>
<dbReference type="PRINTS" id="PR01046">
    <property type="entry name" value="TRNASYNTHPRO"/>
</dbReference>
<dbReference type="SMART" id="SM00946">
    <property type="entry name" value="ProRS-C_1"/>
    <property type="match status" value="1"/>
</dbReference>
<dbReference type="SUPFAM" id="SSF64586">
    <property type="entry name" value="C-terminal domain of ProRS"/>
    <property type="match status" value="1"/>
</dbReference>
<dbReference type="SUPFAM" id="SSF52954">
    <property type="entry name" value="Class II aaRS ABD-related"/>
    <property type="match status" value="1"/>
</dbReference>
<dbReference type="SUPFAM" id="SSF55681">
    <property type="entry name" value="Class II aaRS and biotin synthetases"/>
    <property type="match status" value="1"/>
</dbReference>
<dbReference type="PROSITE" id="PS50862">
    <property type="entry name" value="AA_TRNA_LIGASE_II"/>
    <property type="match status" value="1"/>
</dbReference>